<reference key="1">
    <citation type="journal article" date="2008" name="Genome Res.">
        <title>Insights from the complete genome sequence of Mycobacterium marinum on the evolution of Mycobacterium tuberculosis.</title>
        <authorList>
            <person name="Stinear T.P."/>
            <person name="Seemann T."/>
            <person name="Harrison P.F."/>
            <person name="Jenkin G.A."/>
            <person name="Davies J.K."/>
            <person name="Johnson P.D."/>
            <person name="Abdellah Z."/>
            <person name="Arrowsmith C."/>
            <person name="Chillingworth T."/>
            <person name="Churcher C."/>
            <person name="Clarke K."/>
            <person name="Cronin A."/>
            <person name="Davis P."/>
            <person name="Goodhead I."/>
            <person name="Holroyd N."/>
            <person name="Jagels K."/>
            <person name="Lord A."/>
            <person name="Moule S."/>
            <person name="Mungall K."/>
            <person name="Norbertczak H."/>
            <person name="Quail M.A."/>
            <person name="Rabbinowitsch E."/>
            <person name="Walker D."/>
            <person name="White B."/>
            <person name="Whitehead S."/>
            <person name="Small P.L."/>
            <person name="Brosch R."/>
            <person name="Ramakrishnan L."/>
            <person name="Fischbach M.A."/>
            <person name="Parkhill J."/>
            <person name="Cole S.T."/>
        </authorList>
    </citation>
    <scope>NUCLEOTIDE SEQUENCE [LARGE SCALE GENOMIC DNA]</scope>
    <source>
        <strain>ATCC BAA-535 / M</strain>
    </source>
</reference>
<accession>B2HN79</accession>
<dbReference type="EC" id="6.1.1.21" evidence="1"/>
<dbReference type="EMBL" id="CP000854">
    <property type="protein sequence ID" value="ACC40577.1"/>
    <property type="molecule type" value="Genomic_DNA"/>
</dbReference>
<dbReference type="RefSeq" id="WP_012393894.1">
    <property type="nucleotide sequence ID" value="NC_010612.1"/>
</dbReference>
<dbReference type="SMR" id="B2HN79"/>
<dbReference type="STRING" id="216594.MMAR_2127"/>
<dbReference type="KEGG" id="mmi:MMAR_2127"/>
<dbReference type="eggNOG" id="COG0124">
    <property type="taxonomic scope" value="Bacteria"/>
</dbReference>
<dbReference type="HOGENOM" id="CLU_025113_1_1_11"/>
<dbReference type="OrthoDB" id="9800814at2"/>
<dbReference type="Proteomes" id="UP000001190">
    <property type="component" value="Chromosome"/>
</dbReference>
<dbReference type="GO" id="GO:0005737">
    <property type="term" value="C:cytoplasm"/>
    <property type="evidence" value="ECO:0007669"/>
    <property type="project" value="UniProtKB-SubCell"/>
</dbReference>
<dbReference type="GO" id="GO:0005524">
    <property type="term" value="F:ATP binding"/>
    <property type="evidence" value="ECO:0007669"/>
    <property type="project" value="UniProtKB-UniRule"/>
</dbReference>
<dbReference type="GO" id="GO:0004821">
    <property type="term" value="F:histidine-tRNA ligase activity"/>
    <property type="evidence" value="ECO:0007669"/>
    <property type="project" value="UniProtKB-UniRule"/>
</dbReference>
<dbReference type="GO" id="GO:0006427">
    <property type="term" value="P:histidyl-tRNA aminoacylation"/>
    <property type="evidence" value="ECO:0007669"/>
    <property type="project" value="UniProtKB-UniRule"/>
</dbReference>
<dbReference type="CDD" id="cd00773">
    <property type="entry name" value="HisRS-like_core"/>
    <property type="match status" value="1"/>
</dbReference>
<dbReference type="CDD" id="cd00859">
    <property type="entry name" value="HisRS_anticodon"/>
    <property type="match status" value="1"/>
</dbReference>
<dbReference type="FunFam" id="3.30.930.10:FF:000005">
    <property type="entry name" value="Histidine--tRNA ligase"/>
    <property type="match status" value="1"/>
</dbReference>
<dbReference type="Gene3D" id="3.40.50.800">
    <property type="entry name" value="Anticodon-binding domain"/>
    <property type="match status" value="1"/>
</dbReference>
<dbReference type="Gene3D" id="3.30.930.10">
    <property type="entry name" value="Bira Bifunctional Protein, Domain 2"/>
    <property type="match status" value="1"/>
</dbReference>
<dbReference type="HAMAP" id="MF_00127">
    <property type="entry name" value="His_tRNA_synth"/>
    <property type="match status" value="1"/>
</dbReference>
<dbReference type="InterPro" id="IPR006195">
    <property type="entry name" value="aa-tRNA-synth_II"/>
</dbReference>
<dbReference type="InterPro" id="IPR045864">
    <property type="entry name" value="aa-tRNA-synth_II/BPL/LPL"/>
</dbReference>
<dbReference type="InterPro" id="IPR004154">
    <property type="entry name" value="Anticodon-bd"/>
</dbReference>
<dbReference type="InterPro" id="IPR036621">
    <property type="entry name" value="Anticodon-bd_dom_sf"/>
</dbReference>
<dbReference type="InterPro" id="IPR015807">
    <property type="entry name" value="His-tRNA-ligase"/>
</dbReference>
<dbReference type="InterPro" id="IPR041715">
    <property type="entry name" value="HisRS-like_core"/>
</dbReference>
<dbReference type="InterPro" id="IPR004516">
    <property type="entry name" value="HisRS/HisZ"/>
</dbReference>
<dbReference type="InterPro" id="IPR033656">
    <property type="entry name" value="HisRS_anticodon"/>
</dbReference>
<dbReference type="NCBIfam" id="TIGR00442">
    <property type="entry name" value="hisS"/>
    <property type="match status" value="1"/>
</dbReference>
<dbReference type="PANTHER" id="PTHR43707:SF1">
    <property type="entry name" value="HISTIDINE--TRNA LIGASE, MITOCHONDRIAL-RELATED"/>
    <property type="match status" value="1"/>
</dbReference>
<dbReference type="PANTHER" id="PTHR43707">
    <property type="entry name" value="HISTIDYL-TRNA SYNTHETASE"/>
    <property type="match status" value="1"/>
</dbReference>
<dbReference type="Pfam" id="PF03129">
    <property type="entry name" value="HGTP_anticodon"/>
    <property type="match status" value="1"/>
</dbReference>
<dbReference type="Pfam" id="PF13393">
    <property type="entry name" value="tRNA-synt_His"/>
    <property type="match status" value="1"/>
</dbReference>
<dbReference type="PIRSF" id="PIRSF001549">
    <property type="entry name" value="His-tRNA_synth"/>
    <property type="match status" value="1"/>
</dbReference>
<dbReference type="SUPFAM" id="SSF52954">
    <property type="entry name" value="Class II aaRS ABD-related"/>
    <property type="match status" value="1"/>
</dbReference>
<dbReference type="SUPFAM" id="SSF55681">
    <property type="entry name" value="Class II aaRS and biotin synthetases"/>
    <property type="match status" value="1"/>
</dbReference>
<dbReference type="PROSITE" id="PS50862">
    <property type="entry name" value="AA_TRNA_LIGASE_II"/>
    <property type="match status" value="1"/>
</dbReference>
<sequence>MTEFCAPKGVPDYVPPDSAQFVAVRDGLLTAARRAGYGHIELPIFEDTALFARGVGESTDVVSKEMYTFADRGDRSVTLRPEGTAGVVRAVIEHGLDRGALPVKLCYAGPFFRYERPQAGRYRQLQQVGVEAIGVDDPALDAEVIAIADAGFRSLGLDGFRLEVTSLGDETCRPQYRELLQEFLFGLDLDDDTRRRAALNPLRVLDDKRPEVRAMTAEAPVLLDHLSDVAKQHFDTVLAHLDALRVPYVINPRMVRGLDYYTKTTFEFVHDGLGAQSGIGGGGRYDGLMKQLGGQDLSGIGFGLGVDRTMLALRAEGKSVGESARCDVFGVPLSEQAKLTLAVLAGQLRASGVRVDLAYGDRGLKGAMRAADRSGARVALVAGDRDIEAGTVGVKDLGTGEQVSVSTDSVVDDVISKLGR</sequence>
<feature type="chain" id="PRO_1000095571" description="Histidine--tRNA ligase">
    <location>
        <begin position="1"/>
        <end position="420"/>
    </location>
</feature>
<comment type="catalytic activity">
    <reaction evidence="1">
        <text>tRNA(His) + L-histidine + ATP = L-histidyl-tRNA(His) + AMP + diphosphate + H(+)</text>
        <dbReference type="Rhea" id="RHEA:17313"/>
        <dbReference type="Rhea" id="RHEA-COMP:9665"/>
        <dbReference type="Rhea" id="RHEA-COMP:9689"/>
        <dbReference type="ChEBI" id="CHEBI:15378"/>
        <dbReference type="ChEBI" id="CHEBI:30616"/>
        <dbReference type="ChEBI" id="CHEBI:33019"/>
        <dbReference type="ChEBI" id="CHEBI:57595"/>
        <dbReference type="ChEBI" id="CHEBI:78442"/>
        <dbReference type="ChEBI" id="CHEBI:78527"/>
        <dbReference type="ChEBI" id="CHEBI:456215"/>
        <dbReference type="EC" id="6.1.1.21"/>
    </reaction>
</comment>
<comment type="subunit">
    <text evidence="1">Homodimer.</text>
</comment>
<comment type="subcellular location">
    <subcellularLocation>
        <location evidence="1">Cytoplasm</location>
    </subcellularLocation>
</comment>
<comment type="similarity">
    <text evidence="1">Belongs to the class-II aminoacyl-tRNA synthetase family.</text>
</comment>
<keyword id="KW-0030">Aminoacyl-tRNA synthetase</keyword>
<keyword id="KW-0067">ATP-binding</keyword>
<keyword id="KW-0963">Cytoplasm</keyword>
<keyword id="KW-0436">Ligase</keyword>
<keyword id="KW-0547">Nucleotide-binding</keyword>
<keyword id="KW-0648">Protein biosynthesis</keyword>
<keyword id="KW-1185">Reference proteome</keyword>
<name>SYH_MYCMM</name>
<gene>
    <name evidence="1" type="primary">hisS</name>
    <name type="ordered locus">MMAR_2127</name>
</gene>
<protein>
    <recommendedName>
        <fullName evidence="1">Histidine--tRNA ligase</fullName>
        <ecNumber evidence="1">6.1.1.21</ecNumber>
    </recommendedName>
    <alternativeName>
        <fullName evidence="1">Histidyl-tRNA synthetase</fullName>
        <shortName evidence="1">HisRS</shortName>
    </alternativeName>
</protein>
<proteinExistence type="inferred from homology"/>
<organism>
    <name type="scientific">Mycobacterium marinum (strain ATCC BAA-535 / M)</name>
    <dbReference type="NCBI Taxonomy" id="216594"/>
    <lineage>
        <taxon>Bacteria</taxon>
        <taxon>Bacillati</taxon>
        <taxon>Actinomycetota</taxon>
        <taxon>Actinomycetes</taxon>
        <taxon>Mycobacteriales</taxon>
        <taxon>Mycobacteriaceae</taxon>
        <taxon>Mycobacterium</taxon>
        <taxon>Mycobacterium ulcerans group</taxon>
    </lineage>
</organism>
<evidence type="ECO:0000255" key="1">
    <source>
        <dbReference type="HAMAP-Rule" id="MF_00127"/>
    </source>
</evidence>